<feature type="chain" id="PRO_0000353776" description="Cytochrome c biogenesis protein CcsA">
    <location>
        <begin position="1"/>
        <end position="319"/>
    </location>
</feature>
<feature type="transmembrane region" description="Helical" evidence="1">
    <location>
        <begin position="9"/>
        <end position="29"/>
    </location>
</feature>
<feature type="transmembrane region" description="Helical" evidence="1">
    <location>
        <begin position="44"/>
        <end position="64"/>
    </location>
</feature>
<feature type="transmembrane region" description="Helical" evidence="1">
    <location>
        <begin position="71"/>
        <end position="91"/>
    </location>
</feature>
<feature type="transmembrane region" description="Helical" evidence="1">
    <location>
        <begin position="143"/>
        <end position="163"/>
    </location>
</feature>
<feature type="transmembrane region" description="Helical" evidence="1">
    <location>
        <begin position="225"/>
        <end position="245"/>
    </location>
</feature>
<feature type="transmembrane region" description="Helical" evidence="1">
    <location>
        <begin position="259"/>
        <end position="273"/>
    </location>
</feature>
<feature type="transmembrane region" description="Helical" evidence="1">
    <location>
        <begin position="286"/>
        <end position="306"/>
    </location>
</feature>
<organism>
    <name type="scientific">Oenothera argillicola</name>
    <name type="common">Appalachian evening primrose</name>
    <dbReference type="NCBI Taxonomy" id="3940"/>
    <lineage>
        <taxon>Eukaryota</taxon>
        <taxon>Viridiplantae</taxon>
        <taxon>Streptophyta</taxon>
        <taxon>Embryophyta</taxon>
        <taxon>Tracheophyta</taxon>
        <taxon>Spermatophyta</taxon>
        <taxon>Magnoliopsida</taxon>
        <taxon>eudicotyledons</taxon>
        <taxon>Gunneridae</taxon>
        <taxon>Pentapetalae</taxon>
        <taxon>rosids</taxon>
        <taxon>malvids</taxon>
        <taxon>Myrtales</taxon>
        <taxon>Onagraceae</taxon>
        <taxon>Onagroideae</taxon>
        <taxon>Onagreae</taxon>
        <taxon>Oenothera</taxon>
    </lineage>
</organism>
<geneLocation type="chloroplast"/>
<sequence>MIFYTLEHILTHISFSLVSIGITIFLITLSVDEIIGLYDSSEKGVIGTFLCITGLLVTRWAYSGHFPLSNLYESLLFLSWSFAIIHMFPYLKKQKSYVRTITSSSTIFTQGLVTSGLLSEMQQSEILVPALQSQWLMMHVSMMVLGYAALLCGSLLSVALLVITFRKALKIFSKKKAFLKDSFSFVEIQYRNEPSNVLLSTSFISSKNYYRAQLIQQLDRWSSRIISLGFIFLTIGILSGAVWANEAWGSYWNWDPKETWAFITWTMFAIYLHTRTNPNFQSVNSAIVAFLGFIIIWICYFGVNLLGIGLHSYGSFNLH</sequence>
<accession>B0Z4S4</accession>
<dbReference type="EMBL" id="EU262887">
    <property type="protein sequence ID" value="ABW98752.1"/>
    <property type="molecule type" value="Genomic_DNA"/>
</dbReference>
<dbReference type="RefSeq" id="YP_001687185.1">
    <property type="nucleotide sequence ID" value="NC_010358.2"/>
</dbReference>
<dbReference type="SMR" id="B0Z4S4"/>
<dbReference type="GeneID" id="5951918"/>
<dbReference type="GO" id="GO:0009535">
    <property type="term" value="C:chloroplast thylakoid membrane"/>
    <property type="evidence" value="ECO:0007669"/>
    <property type="project" value="UniProtKB-SubCell"/>
</dbReference>
<dbReference type="GO" id="GO:0005886">
    <property type="term" value="C:plasma membrane"/>
    <property type="evidence" value="ECO:0007669"/>
    <property type="project" value="TreeGrafter"/>
</dbReference>
<dbReference type="GO" id="GO:0020037">
    <property type="term" value="F:heme binding"/>
    <property type="evidence" value="ECO:0007669"/>
    <property type="project" value="InterPro"/>
</dbReference>
<dbReference type="GO" id="GO:0017004">
    <property type="term" value="P:cytochrome complex assembly"/>
    <property type="evidence" value="ECO:0007669"/>
    <property type="project" value="UniProtKB-UniRule"/>
</dbReference>
<dbReference type="HAMAP" id="MF_01391">
    <property type="entry name" value="CytC_CcsA"/>
    <property type="match status" value="1"/>
</dbReference>
<dbReference type="InterPro" id="IPR002541">
    <property type="entry name" value="Cyt_c_assembly"/>
</dbReference>
<dbReference type="InterPro" id="IPR017562">
    <property type="entry name" value="Cyt_c_biogenesis_CcsA"/>
</dbReference>
<dbReference type="InterPro" id="IPR045062">
    <property type="entry name" value="Cyt_c_biogenesis_CcsA/CcmC"/>
</dbReference>
<dbReference type="NCBIfam" id="TIGR03144">
    <property type="entry name" value="cytochr_II_ccsB"/>
    <property type="match status" value="1"/>
</dbReference>
<dbReference type="PANTHER" id="PTHR30071:SF1">
    <property type="entry name" value="CYTOCHROME B_B6 PROTEIN-RELATED"/>
    <property type="match status" value="1"/>
</dbReference>
<dbReference type="PANTHER" id="PTHR30071">
    <property type="entry name" value="HEME EXPORTER PROTEIN C"/>
    <property type="match status" value="1"/>
</dbReference>
<dbReference type="Pfam" id="PF01578">
    <property type="entry name" value="Cytochrom_C_asm"/>
    <property type="match status" value="1"/>
</dbReference>
<evidence type="ECO:0000255" key="1">
    <source>
        <dbReference type="HAMAP-Rule" id="MF_01391"/>
    </source>
</evidence>
<proteinExistence type="inferred from homology"/>
<reference key="1">
    <citation type="journal article" date="2008" name="Nucleic Acids Res.">
        <title>The complete nucleotide sequences of the five genetically distinct plastid genomes of Oenothera, subsection Oenothera: I. Sequence evaluation and plastome evolution.</title>
        <authorList>
            <person name="Greiner S."/>
            <person name="Wang X."/>
            <person name="Rauwolf U."/>
            <person name="Silber M.V."/>
            <person name="Mayer K."/>
            <person name="Meurer J."/>
            <person name="Haberer G."/>
            <person name="Herrmann R.G."/>
        </authorList>
    </citation>
    <scope>NUCLEOTIDE SEQUENCE [LARGE SCALE GENOMIC DNA]</scope>
    <source>
        <strain>cv. Douthat 1</strain>
    </source>
</reference>
<name>CCSA_OENAR</name>
<protein>
    <recommendedName>
        <fullName evidence="1">Cytochrome c biogenesis protein CcsA</fullName>
    </recommendedName>
</protein>
<comment type="function">
    <text evidence="1">Required during biogenesis of c-type cytochromes (cytochrome c6 and cytochrome f) at the step of heme attachment.</text>
</comment>
<comment type="subunit">
    <text evidence="1">May interact with Ccs1.</text>
</comment>
<comment type="subcellular location">
    <subcellularLocation>
        <location evidence="1">Plastid</location>
        <location evidence="1">Chloroplast thylakoid membrane</location>
        <topology evidence="1">Multi-pass membrane protein</topology>
    </subcellularLocation>
</comment>
<comment type="similarity">
    <text evidence="1">Belongs to the CcmF/CycK/Ccl1/NrfE/CcsA family.</text>
</comment>
<keyword id="KW-0150">Chloroplast</keyword>
<keyword id="KW-0201">Cytochrome c-type biogenesis</keyword>
<keyword id="KW-0472">Membrane</keyword>
<keyword id="KW-0934">Plastid</keyword>
<keyword id="KW-0793">Thylakoid</keyword>
<keyword id="KW-0812">Transmembrane</keyword>
<keyword id="KW-1133">Transmembrane helix</keyword>
<gene>
    <name evidence="1" type="primary">ccsA</name>
</gene>